<organism>
    <name type="scientific">Haemophilus influenzae (strain PittEE)</name>
    <dbReference type="NCBI Taxonomy" id="374930"/>
    <lineage>
        <taxon>Bacteria</taxon>
        <taxon>Pseudomonadati</taxon>
        <taxon>Pseudomonadota</taxon>
        <taxon>Gammaproteobacteria</taxon>
        <taxon>Pasteurellales</taxon>
        <taxon>Pasteurellaceae</taxon>
        <taxon>Haemophilus</taxon>
    </lineage>
</organism>
<comment type="function">
    <text evidence="1">Catalyzes a trans-dehydration via an enolate intermediate.</text>
</comment>
<comment type="catalytic activity">
    <reaction evidence="1">
        <text>3-dehydroquinate = 3-dehydroshikimate + H2O</text>
        <dbReference type="Rhea" id="RHEA:21096"/>
        <dbReference type="ChEBI" id="CHEBI:15377"/>
        <dbReference type="ChEBI" id="CHEBI:16630"/>
        <dbReference type="ChEBI" id="CHEBI:32364"/>
        <dbReference type="EC" id="4.2.1.10"/>
    </reaction>
</comment>
<comment type="pathway">
    <text evidence="1">Metabolic intermediate biosynthesis; chorismate biosynthesis; chorismate from D-erythrose 4-phosphate and phosphoenolpyruvate: step 3/7.</text>
</comment>
<comment type="subunit">
    <text evidence="1">Homododecamer.</text>
</comment>
<comment type="similarity">
    <text evidence="1">Belongs to the type-II 3-dehydroquinase family.</text>
</comment>
<feature type="chain" id="PRO_1000023469" description="3-dehydroquinate dehydratase">
    <location>
        <begin position="1"/>
        <end position="149"/>
    </location>
</feature>
<feature type="active site" description="Proton acceptor" evidence="1">
    <location>
        <position position="26"/>
    </location>
</feature>
<feature type="active site" description="Proton donor" evidence="1">
    <location>
        <position position="103"/>
    </location>
</feature>
<feature type="binding site" evidence="1">
    <location>
        <position position="77"/>
    </location>
    <ligand>
        <name>substrate</name>
    </ligand>
</feature>
<feature type="binding site" evidence="1">
    <location>
        <position position="83"/>
    </location>
    <ligand>
        <name>substrate</name>
    </ligand>
</feature>
<feature type="binding site" evidence="1">
    <location>
        <position position="90"/>
    </location>
    <ligand>
        <name>substrate</name>
    </ligand>
</feature>
<feature type="binding site" evidence="1">
    <location>
        <begin position="104"/>
        <end position="105"/>
    </location>
    <ligand>
        <name>substrate</name>
    </ligand>
</feature>
<feature type="binding site" evidence="1">
    <location>
        <position position="114"/>
    </location>
    <ligand>
        <name>substrate</name>
    </ligand>
</feature>
<feature type="site" description="Transition state stabilizer" evidence="1">
    <location>
        <position position="21"/>
    </location>
</feature>
<gene>
    <name evidence="1" type="primary">aroQ</name>
    <name type="ordered locus">CGSHiEE_07110</name>
</gene>
<reference key="1">
    <citation type="journal article" date="2007" name="Genome Biol.">
        <title>Characterization and modeling of the Haemophilus influenzae core and supragenomes based on the complete genomic sequences of Rd and 12 clinical nontypeable strains.</title>
        <authorList>
            <person name="Hogg J.S."/>
            <person name="Hu F.Z."/>
            <person name="Janto B."/>
            <person name="Boissy R."/>
            <person name="Hayes J."/>
            <person name="Keefe R."/>
            <person name="Post J.C."/>
            <person name="Ehrlich G.D."/>
        </authorList>
    </citation>
    <scope>NUCLEOTIDE SEQUENCE [LARGE SCALE GENOMIC DNA]</scope>
    <source>
        <strain>PittEE</strain>
    </source>
</reference>
<proteinExistence type="inferred from homology"/>
<evidence type="ECO:0000255" key="1">
    <source>
        <dbReference type="HAMAP-Rule" id="MF_00169"/>
    </source>
</evidence>
<name>AROQ_HAEIE</name>
<sequence>MSQTHRILLLNGPNLNMLGAREPKHYGSISLTSIEEKIQTLATQHNVKVECFQANSEEKLINKIHESFQQVDFILINPAAYTHTSVALRDALLAVSIPFVEIHLSNVHKREPFRHHSYFSDVAEGVICGLGAKGYEFAFLFAMDYLAKK</sequence>
<keyword id="KW-0028">Amino-acid biosynthesis</keyword>
<keyword id="KW-0057">Aromatic amino acid biosynthesis</keyword>
<keyword id="KW-0456">Lyase</keyword>
<protein>
    <recommendedName>
        <fullName evidence="1">3-dehydroquinate dehydratase</fullName>
        <shortName evidence="1">3-dehydroquinase</shortName>
        <ecNumber evidence="1">4.2.1.10</ecNumber>
    </recommendedName>
    <alternativeName>
        <fullName evidence="1">Type II DHQase</fullName>
    </alternativeName>
</protein>
<dbReference type="EC" id="4.2.1.10" evidence="1"/>
<dbReference type="EMBL" id="CP000671">
    <property type="protein sequence ID" value="ABQ98751.1"/>
    <property type="molecule type" value="Genomic_DNA"/>
</dbReference>
<dbReference type="SMR" id="A5UDA0"/>
<dbReference type="KEGG" id="hip:CGSHiEE_07110"/>
<dbReference type="HOGENOM" id="CLU_090968_1_0_6"/>
<dbReference type="UniPathway" id="UPA00053">
    <property type="reaction ID" value="UER00086"/>
</dbReference>
<dbReference type="GO" id="GO:0003855">
    <property type="term" value="F:3-dehydroquinate dehydratase activity"/>
    <property type="evidence" value="ECO:0007669"/>
    <property type="project" value="UniProtKB-UniRule"/>
</dbReference>
<dbReference type="GO" id="GO:0008652">
    <property type="term" value="P:amino acid biosynthetic process"/>
    <property type="evidence" value="ECO:0007669"/>
    <property type="project" value="UniProtKB-KW"/>
</dbReference>
<dbReference type="GO" id="GO:0009073">
    <property type="term" value="P:aromatic amino acid family biosynthetic process"/>
    <property type="evidence" value="ECO:0007669"/>
    <property type="project" value="UniProtKB-KW"/>
</dbReference>
<dbReference type="GO" id="GO:0009423">
    <property type="term" value="P:chorismate biosynthetic process"/>
    <property type="evidence" value="ECO:0007669"/>
    <property type="project" value="UniProtKB-UniRule"/>
</dbReference>
<dbReference type="GO" id="GO:0019631">
    <property type="term" value="P:quinate catabolic process"/>
    <property type="evidence" value="ECO:0007669"/>
    <property type="project" value="TreeGrafter"/>
</dbReference>
<dbReference type="CDD" id="cd00466">
    <property type="entry name" value="DHQase_II"/>
    <property type="match status" value="1"/>
</dbReference>
<dbReference type="Gene3D" id="3.40.50.9100">
    <property type="entry name" value="Dehydroquinase, class II"/>
    <property type="match status" value="1"/>
</dbReference>
<dbReference type="HAMAP" id="MF_00169">
    <property type="entry name" value="AroQ"/>
    <property type="match status" value="1"/>
</dbReference>
<dbReference type="InterPro" id="IPR001874">
    <property type="entry name" value="DHquinase_II"/>
</dbReference>
<dbReference type="InterPro" id="IPR018509">
    <property type="entry name" value="DHquinase_II_CS"/>
</dbReference>
<dbReference type="InterPro" id="IPR036441">
    <property type="entry name" value="DHquinase_II_sf"/>
</dbReference>
<dbReference type="NCBIfam" id="TIGR01088">
    <property type="entry name" value="aroQ"/>
    <property type="match status" value="1"/>
</dbReference>
<dbReference type="NCBIfam" id="NF003804">
    <property type="entry name" value="PRK05395.1-1"/>
    <property type="match status" value="1"/>
</dbReference>
<dbReference type="NCBIfam" id="NF003805">
    <property type="entry name" value="PRK05395.1-2"/>
    <property type="match status" value="1"/>
</dbReference>
<dbReference type="NCBIfam" id="NF003806">
    <property type="entry name" value="PRK05395.1-3"/>
    <property type="match status" value="1"/>
</dbReference>
<dbReference type="NCBIfam" id="NF003807">
    <property type="entry name" value="PRK05395.1-4"/>
    <property type="match status" value="1"/>
</dbReference>
<dbReference type="PANTHER" id="PTHR21272">
    <property type="entry name" value="CATABOLIC 3-DEHYDROQUINASE"/>
    <property type="match status" value="1"/>
</dbReference>
<dbReference type="PANTHER" id="PTHR21272:SF3">
    <property type="entry name" value="CATABOLIC 3-DEHYDROQUINASE"/>
    <property type="match status" value="1"/>
</dbReference>
<dbReference type="Pfam" id="PF01220">
    <property type="entry name" value="DHquinase_II"/>
    <property type="match status" value="1"/>
</dbReference>
<dbReference type="PIRSF" id="PIRSF001399">
    <property type="entry name" value="DHquinase_II"/>
    <property type="match status" value="1"/>
</dbReference>
<dbReference type="SUPFAM" id="SSF52304">
    <property type="entry name" value="Type II 3-dehydroquinate dehydratase"/>
    <property type="match status" value="1"/>
</dbReference>
<dbReference type="PROSITE" id="PS01029">
    <property type="entry name" value="DEHYDROQUINASE_II"/>
    <property type="match status" value="1"/>
</dbReference>
<accession>A5UDA0</accession>